<dbReference type="EC" id="3.2.1.52" evidence="1"/>
<dbReference type="EMBL" id="AM039952">
    <property type="protein sequence ID" value="CAJ23017.1"/>
    <property type="status" value="ALT_INIT"/>
    <property type="molecule type" value="Genomic_DNA"/>
</dbReference>
<dbReference type="RefSeq" id="WP_041855112.1">
    <property type="nucleotide sequence ID" value="NZ_CP017190.1"/>
</dbReference>
<dbReference type="SMR" id="Q3BVU6"/>
<dbReference type="STRING" id="456327.BJD11_15730"/>
<dbReference type="CAZy" id="GH3">
    <property type="family name" value="Glycoside Hydrolase Family 3"/>
</dbReference>
<dbReference type="KEGG" id="xcv:XCV1386"/>
<dbReference type="eggNOG" id="COG1472">
    <property type="taxonomic scope" value="Bacteria"/>
</dbReference>
<dbReference type="HOGENOM" id="CLU_008392_0_0_6"/>
<dbReference type="UniPathway" id="UPA00544"/>
<dbReference type="Proteomes" id="UP000007069">
    <property type="component" value="Chromosome"/>
</dbReference>
<dbReference type="GO" id="GO:0005737">
    <property type="term" value="C:cytoplasm"/>
    <property type="evidence" value="ECO:0007669"/>
    <property type="project" value="UniProtKB-SubCell"/>
</dbReference>
<dbReference type="GO" id="GO:0004563">
    <property type="term" value="F:beta-N-acetylhexosaminidase activity"/>
    <property type="evidence" value="ECO:0007669"/>
    <property type="project" value="UniProtKB-UniRule"/>
</dbReference>
<dbReference type="GO" id="GO:0005975">
    <property type="term" value="P:carbohydrate metabolic process"/>
    <property type="evidence" value="ECO:0007669"/>
    <property type="project" value="InterPro"/>
</dbReference>
<dbReference type="GO" id="GO:0051301">
    <property type="term" value="P:cell division"/>
    <property type="evidence" value="ECO:0007669"/>
    <property type="project" value="UniProtKB-KW"/>
</dbReference>
<dbReference type="GO" id="GO:0071555">
    <property type="term" value="P:cell wall organization"/>
    <property type="evidence" value="ECO:0007669"/>
    <property type="project" value="UniProtKB-KW"/>
</dbReference>
<dbReference type="GO" id="GO:0009252">
    <property type="term" value="P:peptidoglycan biosynthetic process"/>
    <property type="evidence" value="ECO:0007669"/>
    <property type="project" value="UniProtKB-KW"/>
</dbReference>
<dbReference type="GO" id="GO:0009254">
    <property type="term" value="P:peptidoglycan turnover"/>
    <property type="evidence" value="ECO:0007669"/>
    <property type="project" value="UniProtKB-UniRule"/>
</dbReference>
<dbReference type="GO" id="GO:0008360">
    <property type="term" value="P:regulation of cell shape"/>
    <property type="evidence" value="ECO:0007669"/>
    <property type="project" value="UniProtKB-KW"/>
</dbReference>
<dbReference type="FunFam" id="3.20.20.300:FF:000001">
    <property type="entry name" value="Beta-hexosaminidase"/>
    <property type="match status" value="1"/>
</dbReference>
<dbReference type="Gene3D" id="3.20.20.300">
    <property type="entry name" value="Glycoside hydrolase, family 3, N-terminal domain"/>
    <property type="match status" value="1"/>
</dbReference>
<dbReference type="HAMAP" id="MF_00364">
    <property type="entry name" value="NagZ"/>
    <property type="match status" value="1"/>
</dbReference>
<dbReference type="InterPro" id="IPR022956">
    <property type="entry name" value="Beta_hexosaminidase_bac"/>
</dbReference>
<dbReference type="InterPro" id="IPR019800">
    <property type="entry name" value="Glyco_hydro_3_AS"/>
</dbReference>
<dbReference type="InterPro" id="IPR001764">
    <property type="entry name" value="Glyco_hydro_3_N"/>
</dbReference>
<dbReference type="InterPro" id="IPR036962">
    <property type="entry name" value="Glyco_hydro_3_N_sf"/>
</dbReference>
<dbReference type="InterPro" id="IPR017853">
    <property type="entry name" value="Glycoside_hydrolase_SF"/>
</dbReference>
<dbReference type="InterPro" id="IPR050226">
    <property type="entry name" value="NagZ_Beta-hexosaminidase"/>
</dbReference>
<dbReference type="NCBIfam" id="NF003740">
    <property type="entry name" value="PRK05337.1"/>
    <property type="match status" value="1"/>
</dbReference>
<dbReference type="PANTHER" id="PTHR30480:SF13">
    <property type="entry name" value="BETA-HEXOSAMINIDASE"/>
    <property type="match status" value="1"/>
</dbReference>
<dbReference type="PANTHER" id="PTHR30480">
    <property type="entry name" value="BETA-HEXOSAMINIDASE-RELATED"/>
    <property type="match status" value="1"/>
</dbReference>
<dbReference type="Pfam" id="PF00933">
    <property type="entry name" value="Glyco_hydro_3"/>
    <property type="match status" value="1"/>
</dbReference>
<dbReference type="SUPFAM" id="SSF51445">
    <property type="entry name" value="(Trans)glycosidases"/>
    <property type="match status" value="1"/>
</dbReference>
<dbReference type="PROSITE" id="PS00775">
    <property type="entry name" value="GLYCOSYL_HYDROL_F3"/>
    <property type="match status" value="1"/>
</dbReference>
<protein>
    <recommendedName>
        <fullName evidence="1">Beta-hexosaminidase</fullName>
        <ecNumber evidence="1">3.2.1.52</ecNumber>
    </recommendedName>
    <alternativeName>
        <fullName evidence="1">Beta-N-acetylhexosaminidase</fullName>
    </alternativeName>
    <alternativeName>
        <fullName evidence="1">N-acetyl-beta-glucosaminidase</fullName>
    </alternativeName>
</protein>
<gene>
    <name evidence="1" type="primary">nagZ</name>
    <name type="ordered locus">XCV1386</name>
</gene>
<comment type="function">
    <text evidence="1">Plays a role in peptidoglycan recycling by cleaving the terminal beta-1,4-linked N-acetylglucosamine (GlcNAc) from peptide-linked peptidoglycan fragments, giving rise to free GlcNAc, anhydro-N-acetylmuramic acid and anhydro-N-acetylmuramic acid-linked peptides.</text>
</comment>
<comment type="catalytic activity">
    <reaction evidence="1">
        <text>Hydrolysis of terminal non-reducing N-acetyl-D-hexosamine residues in N-acetyl-beta-D-hexosaminides.</text>
        <dbReference type="EC" id="3.2.1.52"/>
    </reaction>
</comment>
<comment type="pathway">
    <text evidence="1">Cell wall biogenesis; peptidoglycan recycling.</text>
</comment>
<comment type="subcellular location">
    <subcellularLocation>
        <location evidence="1">Cytoplasm</location>
    </subcellularLocation>
</comment>
<comment type="similarity">
    <text evidence="1">Belongs to the glycosyl hydrolase 3 family. NagZ subfamily.</text>
</comment>
<comment type="sequence caution" evidence="2">
    <conflict type="erroneous initiation">
        <sequence resource="EMBL-CDS" id="CAJ23017"/>
    </conflict>
</comment>
<sequence length="334" mass="34931">MLLIGVAGTELSAQERDWLQHDAVAGVVLFKRNFASRTQVAELSAAIRAAAPRPVLVCVDQEGGRVQRFREGFSALAPLQSFGAQYAHDPESALAAARAHAQLMASEVRASGVDLSFAPVVDLGRGNRAIGDRAFSDDPQIVATFTRAYVQALHGAGMAATLKHFPGHGTVLEDTHVDHASDPRPLEVLQAEDLVPFVAGIEAGADAVMMAHVVYPQVAPEPAGYSQRWIEQILRGQMGFCGVVFSDDIGMAASFSAGGVAGRVHAHLDAGCDVVLVCHPELVAESLQAVQGRSLNTAALIGLIGRGALGWDGLLAGTDASFTTPPSAHFGTTA</sequence>
<organism>
    <name type="scientific">Xanthomonas euvesicatoria pv. vesicatoria (strain 85-10)</name>
    <name type="common">Xanthomonas campestris pv. vesicatoria</name>
    <dbReference type="NCBI Taxonomy" id="316273"/>
    <lineage>
        <taxon>Bacteria</taxon>
        <taxon>Pseudomonadati</taxon>
        <taxon>Pseudomonadota</taxon>
        <taxon>Gammaproteobacteria</taxon>
        <taxon>Lysobacterales</taxon>
        <taxon>Lysobacteraceae</taxon>
        <taxon>Xanthomonas</taxon>
    </lineage>
</organism>
<keyword id="KW-0131">Cell cycle</keyword>
<keyword id="KW-0132">Cell division</keyword>
<keyword id="KW-0133">Cell shape</keyword>
<keyword id="KW-0961">Cell wall biogenesis/degradation</keyword>
<keyword id="KW-0963">Cytoplasm</keyword>
<keyword id="KW-0326">Glycosidase</keyword>
<keyword id="KW-0378">Hydrolase</keyword>
<keyword id="KW-0573">Peptidoglycan synthesis</keyword>
<reference key="1">
    <citation type="journal article" date="2005" name="J. Bacteriol.">
        <title>Insights into genome plasticity and pathogenicity of the plant pathogenic Bacterium Xanthomonas campestris pv. vesicatoria revealed by the complete genome sequence.</title>
        <authorList>
            <person name="Thieme F."/>
            <person name="Koebnik R."/>
            <person name="Bekel T."/>
            <person name="Berger C."/>
            <person name="Boch J."/>
            <person name="Buettner D."/>
            <person name="Caldana C."/>
            <person name="Gaigalat L."/>
            <person name="Goesmann A."/>
            <person name="Kay S."/>
            <person name="Kirchner O."/>
            <person name="Lanz C."/>
            <person name="Linke B."/>
            <person name="McHardy A.C."/>
            <person name="Meyer F."/>
            <person name="Mittenhuber G."/>
            <person name="Nies D.H."/>
            <person name="Niesbach-Kloesgen U."/>
            <person name="Patschkowski T."/>
            <person name="Rueckert C."/>
            <person name="Rupp O."/>
            <person name="Schneiker S."/>
            <person name="Schuster S.C."/>
            <person name="Vorhoelter F.J."/>
            <person name="Weber E."/>
            <person name="Puehler A."/>
            <person name="Bonas U."/>
            <person name="Bartels D."/>
            <person name="Kaiser O."/>
        </authorList>
    </citation>
    <scope>NUCLEOTIDE SEQUENCE [LARGE SCALE GENOMIC DNA]</scope>
    <source>
        <strain>85-10</strain>
    </source>
</reference>
<name>NAGZ_XANE5</name>
<proteinExistence type="inferred from homology"/>
<accession>Q3BVU6</accession>
<evidence type="ECO:0000255" key="1">
    <source>
        <dbReference type="HAMAP-Rule" id="MF_00364"/>
    </source>
</evidence>
<evidence type="ECO:0000305" key="2"/>
<feature type="chain" id="PRO_0000234929" description="Beta-hexosaminidase">
    <location>
        <begin position="1"/>
        <end position="334"/>
    </location>
</feature>
<feature type="active site" description="Proton donor/acceptor" evidence="1">
    <location>
        <position position="176"/>
    </location>
</feature>
<feature type="active site" description="Nucleophile" evidence="1">
    <location>
        <position position="247"/>
    </location>
</feature>
<feature type="binding site" evidence="1">
    <location>
        <position position="60"/>
    </location>
    <ligand>
        <name>substrate</name>
    </ligand>
</feature>
<feature type="binding site" evidence="1">
    <location>
        <position position="68"/>
    </location>
    <ligand>
        <name>substrate</name>
    </ligand>
</feature>
<feature type="binding site" evidence="1">
    <location>
        <position position="133"/>
    </location>
    <ligand>
        <name>substrate</name>
    </ligand>
</feature>
<feature type="binding site" evidence="1">
    <location>
        <begin position="163"/>
        <end position="164"/>
    </location>
    <ligand>
        <name>substrate</name>
    </ligand>
</feature>
<feature type="site" description="Important for catalytic activity" evidence="1">
    <location>
        <position position="174"/>
    </location>
</feature>